<organism>
    <name type="scientific">Schizosaccharomyces pombe (strain 972 / ATCC 24843)</name>
    <name type="common">Fission yeast</name>
    <dbReference type="NCBI Taxonomy" id="284812"/>
    <lineage>
        <taxon>Eukaryota</taxon>
        <taxon>Fungi</taxon>
        <taxon>Dikarya</taxon>
        <taxon>Ascomycota</taxon>
        <taxon>Taphrinomycotina</taxon>
        <taxon>Schizosaccharomycetes</taxon>
        <taxon>Schizosaccharomycetales</taxon>
        <taxon>Schizosaccharomycetaceae</taxon>
        <taxon>Schizosaccharomyces</taxon>
    </lineage>
</organism>
<feature type="transit peptide" description="Mitochondrion" evidence="2">
    <location>
        <begin position="1"/>
        <end position="25"/>
    </location>
</feature>
<feature type="chain" id="PRO_0000343146" description="Large ribosomal subunit protein mL46">
    <location>
        <begin position="26"/>
        <end position="268"/>
    </location>
</feature>
<evidence type="ECO:0000250" key="1">
    <source>
        <dbReference type="UniProtKB" id="P36528"/>
    </source>
</evidence>
<evidence type="ECO:0000255" key="2"/>
<evidence type="ECO:0000269" key="3">
    <source>
    </source>
</evidence>
<evidence type="ECO:0000305" key="4"/>
<proteinExistence type="inferred from homology"/>
<reference key="1">
    <citation type="journal article" date="2002" name="Nature">
        <title>The genome sequence of Schizosaccharomyces pombe.</title>
        <authorList>
            <person name="Wood V."/>
            <person name="Gwilliam R."/>
            <person name="Rajandream M.A."/>
            <person name="Lyne M.H."/>
            <person name="Lyne R."/>
            <person name="Stewart A."/>
            <person name="Sgouros J.G."/>
            <person name="Peat N."/>
            <person name="Hayles J."/>
            <person name="Baker S.G."/>
            <person name="Basham D."/>
            <person name="Bowman S."/>
            <person name="Brooks K."/>
            <person name="Brown D."/>
            <person name="Brown S."/>
            <person name="Chillingworth T."/>
            <person name="Churcher C.M."/>
            <person name="Collins M."/>
            <person name="Connor R."/>
            <person name="Cronin A."/>
            <person name="Davis P."/>
            <person name="Feltwell T."/>
            <person name="Fraser A."/>
            <person name="Gentles S."/>
            <person name="Goble A."/>
            <person name="Hamlin N."/>
            <person name="Harris D.E."/>
            <person name="Hidalgo J."/>
            <person name="Hodgson G."/>
            <person name="Holroyd S."/>
            <person name="Hornsby T."/>
            <person name="Howarth S."/>
            <person name="Huckle E.J."/>
            <person name="Hunt S."/>
            <person name="Jagels K."/>
            <person name="James K.D."/>
            <person name="Jones L."/>
            <person name="Jones M."/>
            <person name="Leather S."/>
            <person name="McDonald S."/>
            <person name="McLean J."/>
            <person name="Mooney P."/>
            <person name="Moule S."/>
            <person name="Mungall K.L."/>
            <person name="Murphy L.D."/>
            <person name="Niblett D."/>
            <person name="Odell C."/>
            <person name="Oliver K."/>
            <person name="O'Neil S."/>
            <person name="Pearson D."/>
            <person name="Quail M.A."/>
            <person name="Rabbinowitsch E."/>
            <person name="Rutherford K.M."/>
            <person name="Rutter S."/>
            <person name="Saunders D."/>
            <person name="Seeger K."/>
            <person name="Sharp S."/>
            <person name="Skelton J."/>
            <person name="Simmonds M.N."/>
            <person name="Squares R."/>
            <person name="Squares S."/>
            <person name="Stevens K."/>
            <person name="Taylor K."/>
            <person name="Taylor R.G."/>
            <person name="Tivey A."/>
            <person name="Walsh S.V."/>
            <person name="Warren T."/>
            <person name="Whitehead S."/>
            <person name="Woodward J.R."/>
            <person name="Volckaert G."/>
            <person name="Aert R."/>
            <person name="Robben J."/>
            <person name="Grymonprez B."/>
            <person name="Weltjens I."/>
            <person name="Vanstreels E."/>
            <person name="Rieger M."/>
            <person name="Schaefer M."/>
            <person name="Mueller-Auer S."/>
            <person name="Gabel C."/>
            <person name="Fuchs M."/>
            <person name="Duesterhoeft A."/>
            <person name="Fritzc C."/>
            <person name="Holzer E."/>
            <person name="Moestl D."/>
            <person name="Hilbert H."/>
            <person name="Borzym K."/>
            <person name="Langer I."/>
            <person name="Beck A."/>
            <person name="Lehrach H."/>
            <person name="Reinhardt R."/>
            <person name="Pohl T.M."/>
            <person name="Eger P."/>
            <person name="Zimmermann W."/>
            <person name="Wedler H."/>
            <person name="Wambutt R."/>
            <person name="Purnelle B."/>
            <person name="Goffeau A."/>
            <person name="Cadieu E."/>
            <person name="Dreano S."/>
            <person name="Gloux S."/>
            <person name="Lelaure V."/>
            <person name="Mottier S."/>
            <person name="Galibert F."/>
            <person name="Aves S.J."/>
            <person name="Xiang Z."/>
            <person name="Hunt C."/>
            <person name="Moore K."/>
            <person name="Hurst S.M."/>
            <person name="Lucas M."/>
            <person name="Rochet M."/>
            <person name="Gaillardin C."/>
            <person name="Tallada V.A."/>
            <person name="Garzon A."/>
            <person name="Thode G."/>
            <person name="Daga R.R."/>
            <person name="Cruzado L."/>
            <person name="Jimenez J."/>
            <person name="Sanchez M."/>
            <person name="del Rey F."/>
            <person name="Benito J."/>
            <person name="Dominguez A."/>
            <person name="Revuelta J.L."/>
            <person name="Moreno S."/>
            <person name="Armstrong J."/>
            <person name="Forsburg S.L."/>
            <person name="Cerutti L."/>
            <person name="Lowe T."/>
            <person name="McCombie W.R."/>
            <person name="Paulsen I."/>
            <person name="Potashkin J."/>
            <person name="Shpakovski G.V."/>
            <person name="Ussery D."/>
            <person name="Barrell B.G."/>
            <person name="Nurse P."/>
        </authorList>
    </citation>
    <scope>NUCLEOTIDE SEQUENCE [LARGE SCALE GENOMIC DNA]</scope>
    <source>
        <strain>972 / ATCC 24843</strain>
    </source>
</reference>
<reference key="2">
    <citation type="journal article" date="2006" name="Nat. Biotechnol.">
        <title>ORFeome cloning and global analysis of protein localization in the fission yeast Schizosaccharomyces pombe.</title>
        <authorList>
            <person name="Matsuyama A."/>
            <person name="Arai R."/>
            <person name="Yashiroda Y."/>
            <person name="Shirai A."/>
            <person name="Kamata A."/>
            <person name="Sekido S."/>
            <person name="Kobayashi Y."/>
            <person name="Hashimoto A."/>
            <person name="Hamamoto M."/>
            <person name="Hiraoka Y."/>
            <person name="Horinouchi S."/>
            <person name="Yoshida M."/>
        </authorList>
    </citation>
    <scope>SUBCELLULAR LOCATION [LARGE SCALE ANALYSIS]</scope>
</reference>
<gene>
    <name type="primary">mrpl17</name>
    <name type="ORF">SPCC126.05c</name>
</gene>
<dbReference type="EMBL" id="CU329672">
    <property type="protein sequence ID" value="CAA22474.1"/>
    <property type="molecule type" value="Genomic_DNA"/>
</dbReference>
<dbReference type="PIR" id="T40909">
    <property type="entry name" value="T40909"/>
</dbReference>
<dbReference type="RefSeq" id="NP_588448.1">
    <property type="nucleotide sequence ID" value="NM_001023439.2"/>
</dbReference>
<dbReference type="SMR" id="O94398"/>
<dbReference type="BioGRID" id="275675">
    <property type="interactions" value="2"/>
</dbReference>
<dbReference type="ComplexPortal" id="CPX-10323">
    <property type="entry name" value="54S mitochondrial large ribosomal subunit"/>
</dbReference>
<dbReference type="FunCoup" id="O94398">
    <property type="interactions" value="78"/>
</dbReference>
<dbReference type="STRING" id="284812.O94398"/>
<dbReference type="PaxDb" id="4896-SPCC126.05c.1"/>
<dbReference type="EnsemblFungi" id="SPCC126.05c.1">
    <property type="protein sequence ID" value="SPCC126.05c.1:pep"/>
    <property type="gene ID" value="SPCC126.05c"/>
</dbReference>
<dbReference type="GeneID" id="2539103"/>
<dbReference type="KEGG" id="spo:2539103"/>
<dbReference type="PomBase" id="SPCC126.05c">
    <property type="gene designation" value="mrpl17"/>
</dbReference>
<dbReference type="VEuPathDB" id="FungiDB:SPCC126.05c"/>
<dbReference type="eggNOG" id="KOG4548">
    <property type="taxonomic scope" value="Eukaryota"/>
</dbReference>
<dbReference type="HOGENOM" id="CLU_040204_0_0_1"/>
<dbReference type="InParanoid" id="O94398"/>
<dbReference type="OMA" id="YNAELWN"/>
<dbReference type="PhylomeDB" id="O94398"/>
<dbReference type="PRO" id="PR:O94398"/>
<dbReference type="Proteomes" id="UP000002485">
    <property type="component" value="Chromosome III"/>
</dbReference>
<dbReference type="GO" id="GO:0005762">
    <property type="term" value="C:mitochondrial large ribosomal subunit"/>
    <property type="evidence" value="ECO:0000318"/>
    <property type="project" value="GO_Central"/>
</dbReference>
<dbReference type="GO" id="GO:0005739">
    <property type="term" value="C:mitochondrion"/>
    <property type="evidence" value="ECO:0007005"/>
    <property type="project" value="PomBase"/>
</dbReference>
<dbReference type="GO" id="GO:0003735">
    <property type="term" value="F:structural constituent of ribosome"/>
    <property type="evidence" value="ECO:0000318"/>
    <property type="project" value="GO_Central"/>
</dbReference>
<dbReference type="GO" id="GO:0032543">
    <property type="term" value="P:mitochondrial translation"/>
    <property type="evidence" value="ECO:0000250"/>
    <property type="project" value="PomBase"/>
</dbReference>
<dbReference type="CDD" id="cd04661">
    <property type="entry name" value="NUDIX_MRP_L46"/>
    <property type="match status" value="1"/>
</dbReference>
<dbReference type="Gene3D" id="3.90.79.10">
    <property type="entry name" value="Nucleoside Triphosphate Pyrophosphohydrolase"/>
    <property type="match status" value="1"/>
</dbReference>
<dbReference type="InterPro" id="IPR040008">
    <property type="entry name" value="Ribosomal_mL46"/>
</dbReference>
<dbReference type="InterPro" id="IPR021757">
    <property type="entry name" value="Ribosomal_mL46_N"/>
</dbReference>
<dbReference type="InterPro" id="IPR033650">
    <property type="entry name" value="Ribosomal_mL46_NUDIX"/>
</dbReference>
<dbReference type="PANTHER" id="PTHR13124">
    <property type="entry name" value="39S RIBOSOMAL PROTEIN L46, MITOCHONDRIAL PRECURSOR-RELATED"/>
    <property type="match status" value="1"/>
</dbReference>
<dbReference type="PANTHER" id="PTHR13124:SF12">
    <property type="entry name" value="LARGE RIBOSOMAL SUBUNIT PROTEIN ML46"/>
    <property type="match status" value="1"/>
</dbReference>
<dbReference type="Pfam" id="PF11788">
    <property type="entry name" value="MRP-L46"/>
    <property type="match status" value="1"/>
</dbReference>
<comment type="function">
    <text evidence="1">Component of the mitochondrial ribosome (mitoribosome), a dedicated translation machinery responsible for the synthesis of mitochondrial genome-encoded proteins, including at least some of the essential transmembrane subunits of the mitochondrial respiratory chain. The mitoribosomes are attached to the mitochondrial inner membrane and translation products are cotranslationally integrated into the membrane.</text>
</comment>
<comment type="subunit">
    <text evidence="1">Component of the mitochondrial large ribosomal subunit (mt-LSU). Mature yeast 74S mitochondrial ribosomes consist of a small (37S) and a large (54S) subunit. The 37S small subunit contains a 15S ribosomal RNA (15S mt-rRNA) and at least 32 different proteins. The 54S large subunit contains a 21S rRNA (21S mt-rRNA) and at least 45 different proteins.</text>
</comment>
<comment type="subcellular location">
    <subcellularLocation>
        <location evidence="3">Mitochondrion</location>
    </subcellularLocation>
</comment>
<comment type="similarity">
    <text evidence="4">Belongs to the mitochondrion-specific ribosomal protein mL46 family.</text>
</comment>
<keyword id="KW-0496">Mitochondrion</keyword>
<keyword id="KW-1185">Reference proteome</keyword>
<keyword id="KW-0687">Ribonucleoprotein</keyword>
<keyword id="KW-0689">Ribosomal protein</keyword>
<keyword id="KW-0809">Transit peptide</keyword>
<accession>O94398</accession>
<protein>
    <recommendedName>
        <fullName evidence="4">Large ribosomal subunit protein mL46</fullName>
    </recommendedName>
    <alternativeName>
        <fullName>54S ribosomal protein L17, mitochondrial</fullName>
    </alternativeName>
</protein>
<sequence>MYLKRNIINMQRSFSRQFHISVRNSIQSSKPLSNSTPLKGCSVGTILIRSPILTRQPSEFEKSIYKYNAELWNELSDPLPAEFYFKKGSVGEKDWQERQKTLKGKESPFETIFGKERKEMESNKLLDSATHLQSRVTEADTKNDERSTLRSLDKSLYLLVKKSKSSGWQFPNTPVTSSEKALHLLCQDLLKNILDENSLTWLVARHPLALLKTEQEKTFLLRARLLNGLDVPNLQNVYDWVWCTYDELKNKLSPSSWDSVKNILSDRL</sequence>
<name>RM17_SCHPO</name>